<organism>
    <name type="scientific">Caenorhabditis elegans</name>
    <dbReference type="NCBI Taxonomy" id="6239"/>
    <lineage>
        <taxon>Eukaryota</taxon>
        <taxon>Metazoa</taxon>
        <taxon>Ecdysozoa</taxon>
        <taxon>Nematoda</taxon>
        <taxon>Chromadorea</taxon>
        <taxon>Rhabditida</taxon>
        <taxon>Rhabditina</taxon>
        <taxon>Rhabditomorpha</taxon>
        <taxon>Rhabditoidea</taxon>
        <taxon>Rhabditidae</taxon>
        <taxon>Peloderinae</taxon>
        <taxon>Caenorhabditis</taxon>
    </lineage>
</organism>
<sequence length="341" mass="39037">MAGVMSVKDFIVATKYKLIRKIGSGSFGDIYVSINVTNGEEVAIKLESNRARHPQLLYESKVYRILQGGVGIPHIRWYGTEREYNVLVMDLLGPSLEDLFNFCSRRFTMKTVLMLADQMIGRIEYVHVKNFIHRDIKPDNFLMGIGRHCNKLFLIDFGLAKKYRDSRTRTHIPYREDKNLTGTARYASINAHLGIEQSRRDDMESLGYVLMYFNRGTLPWQGLKAATKKQKYEKISEKKMTTSVEHLCKGFPAEFPMYLSYTRGLRFDESPDYMYLRQLFRILFRTLNHQYDYTFDWTMLKQKAQQSQSSGVPGTNTTTQGATVPSAGVPAGVAPGGTTPQ</sequence>
<dbReference type="EC" id="2.7.11.1"/>
<dbReference type="EMBL" id="Z35637">
    <property type="protein sequence ID" value="CAA84685.1"/>
    <property type="molecule type" value="Genomic_DNA"/>
</dbReference>
<dbReference type="PIR" id="T18873">
    <property type="entry name" value="T18873"/>
</dbReference>
<dbReference type="RefSeq" id="NP_001369852.1">
    <property type="nucleotide sequence ID" value="NM_001384062.2"/>
</dbReference>
<dbReference type="RefSeq" id="NP_497818.1">
    <property type="nucleotide sequence ID" value="NM_065417.5"/>
</dbReference>
<dbReference type="SMR" id="P42168"/>
<dbReference type="BioGRID" id="40761">
    <property type="interactions" value="9"/>
</dbReference>
<dbReference type="FunCoup" id="P42168">
    <property type="interactions" value="1929"/>
</dbReference>
<dbReference type="STRING" id="6239.C03C10.1.1"/>
<dbReference type="iPTMnet" id="P42168"/>
<dbReference type="PaxDb" id="6239-C03C10.1.1"/>
<dbReference type="PeptideAtlas" id="P42168"/>
<dbReference type="EnsemblMetazoa" id="C03C10.1.1">
    <property type="protein sequence ID" value="C03C10.1.1"/>
    <property type="gene ID" value="WBGene00002202"/>
</dbReference>
<dbReference type="EnsemblMetazoa" id="C03C10.1.2">
    <property type="protein sequence ID" value="C03C10.1.2"/>
    <property type="gene ID" value="WBGene00002202"/>
</dbReference>
<dbReference type="EnsemblMetazoa" id="C03C10.1.3">
    <property type="protein sequence ID" value="C03C10.1.3"/>
    <property type="gene ID" value="WBGene00002202"/>
</dbReference>
<dbReference type="GeneID" id="175524"/>
<dbReference type="UCSC" id="C03C10.1.1">
    <property type="organism name" value="c. elegans"/>
</dbReference>
<dbReference type="AGR" id="WB:WBGene00002202"/>
<dbReference type="WormBase" id="C03C10.1">
    <property type="protein sequence ID" value="CE00872"/>
    <property type="gene ID" value="WBGene00002202"/>
    <property type="gene designation" value="kin-19"/>
</dbReference>
<dbReference type="eggNOG" id="KOG1163">
    <property type="taxonomic scope" value="Eukaryota"/>
</dbReference>
<dbReference type="GeneTree" id="ENSGT00940000153700"/>
<dbReference type="HOGENOM" id="CLU_019279_2_0_1"/>
<dbReference type="InParanoid" id="P42168"/>
<dbReference type="OMA" id="NKCFIHR"/>
<dbReference type="OrthoDB" id="5800476at2759"/>
<dbReference type="PhylomeDB" id="P42168"/>
<dbReference type="Reactome" id="R-CEL-195253">
    <property type="pathway name" value="Degradation of beta-catenin by the destruction complex"/>
</dbReference>
<dbReference type="Reactome" id="R-CEL-196299">
    <property type="pathway name" value="Beta-catenin phosphorylation cascade"/>
</dbReference>
<dbReference type="SignaLink" id="P42168"/>
<dbReference type="PRO" id="PR:P42168"/>
<dbReference type="Proteomes" id="UP000001940">
    <property type="component" value="Chromosome III"/>
</dbReference>
<dbReference type="Bgee" id="WBGene00002202">
    <property type="expression patterns" value="Expressed in pharyngeal muscle cell (C elegans) and 4 other cell types or tissues"/>
</dbReference>
<dbReference type="GO" id="GO:0005813">
    <property type="term" value="C:centrosome"/>
    <property type="evidence" value="ECO:0000314"/>
    <property type="project" value="WormBase"/>
</dbReference>
<dbReference type="GO" id="GO:0005737">
    <property type="term" value="C:cytoplasm"/>
    <property type="evidence" value="ECO:0000314"/>
    <property type="project" value="WormBase"/>
</dbReference>
<dbReference type="GO" id="GO:0005634">
    <property type="term" value="C:nucleus"/>
    <property type="evidence" value="ECO:0000314"/>
    <property type="project" value="WormBase"/>
</dbReference>
<dbReference type="GO" id="GO:0005524">
    <property type="term" value="F:ATP binding"/>
    <property type="evidence" value="ECO:0007669"/>
    <property type="project" value="UniProtKB-KW"/>
</dbReference>
<dbReference type="GO" id="GO:0106310">
    <property type="term" value="F:protein serine kinase activity"/>
    <property type="evidence" value="ECO:0007669"/>
    <property type="project" value="RHEA"/>
</dbReference>
<dbReference type="GO" id="GO:0004674">
    <property type="term" value="F:protein serine/threonine kinase activity"/>
    <property type="evidence" value="ECO:0000250"/>
    <property type="project" value="WormBase"/>
</dbReference>
<dbReference type="GO" id="GO:0090090">
    <property type="term" value="P:negative regulation of canonical Wnt signaling pathway"/>
    <property type="evidence" value="ECO:0000318"/>
    <property type="project" value="GO_Central"/>
</dbReference>
<dbReference type="GO" id="GO:0032436">
    <property type="term" value="P:positive regulation of proteasomal ubiquitin-dependent protein catabolic process"/>
    <property type="evidence" value="ECO:0000315"/>
    <property type="project" value="WormBase"/>
</dbReference>
<dbReference type="GO" id="GO:0007165">
    <property type="term" value="P:signal transduction"/>
    <property type="evidence" value="ECO:0000318"/>
    <property type="project" value="GO_Central"/>
</dbReference>
<dbReference type="GO" id="GO:0016055">
    <property type="term" value="P:Wnt signaling pathway"/>
    <property type="evidence" value="ECO:0000315"/>
    <property type="project" value="WormBase"/>
</dbReference>
<dbReference type="GO" id="GO:0060069">
    <property type="term" value="P:Wnt signaling pathway, regulating spindle positioning"/>
    <property type="evidence" value="ECO:0000315"/>
    <property type="project" value="WormBase"/>
</dbReference>
<dbReference type="CDD" id="cd14128">
    <property type="entry name" value="STKc_CK1_alpha"/>
    <property type="match status" value="1"/>
</dbReference>
<dbReference type="FunFam" id="1.10.510.10:FF:000120">
    <property type="entry name" value="Casein kinase I isoform alpha"/>
    <property type="match status" value="1"/>
</dbReference>
<dbReference type="FunFam" id="3.30.200.20:FF:000538">
    <property type="entry name" value="Putative Casein kinase I"/>
    <property type="match status" value="1"/>
</dbReference>
<dbReference type="Gene3D" id="1.10.510.10">
    <property type="entry name" value="Transferase(Phosphotransferase) domain 1"/>
    <property type="match status" value="1"/>
</dbReference>
<dbReference type="InterPro" id="IPR050235">
    <property type="entry name" value="CK1_Ser-Thr_kinase"/>
</dbReference>
<dbReference type="InterPro" id="IPR011009">
    <property type="entry name" value="Kinase-like_dom_sf"/>
</dbReference>
<dbReference type="InterPro" id="IPR000719">
    <property type="entry name" value="Prot_kinase_dom"/>
</dbReference>
<dbReference type="InterPro" id="IPR017441">
    <property type="entry name" value="Protein_kinase_ATP_BS"/>
</dbReference>
<dbReference type="InterPro" id="IPR008271">
    <property type="entry name" value="Ser/Thr_kinase_AS"/>
</dbReference>
<dbReference type="PANTHER" id="PTHR11909">
    <property type="entry name" value="CASEIN KINASE-RELATED"/>
    <property type="match status" value="1"/>
</dbReference>
<dbReference type="Pfam" id="PF00069">
    <property type="entry name" value="Pkinase"/>
    <property type="match status" value="1"/>
</dbReference>
<dbReference type="SMART" id="SM00220">
    <property type="entry name" value="S_TKc"/>
    <property type="match status" value="1"/>
</dbReference>
<dbReference type="SUPFAM" id="SSF56112">
    <property type="entry name" value="Protein kinase-like (PK-like)"/>
    <property type="match status" value="1"/>
</dbReference>
<dbReference type="PROSITE" id="PS00107">
    <property type="entry name" value="PROTEIN_KINASE_ATP"/>
    <property type="match status" value="1"/>
</dbReference>
<dbReference type="PROSITE" id="PS50011">
    <property type="entry name" value="PROTEIN_KINASE_DOM"/>
    <property type="match status" value="1"/>
</dbReference>
<dbReference type="PROSITE" id="PS00108">
    <property type="entry name" value="PROTEIN_KINASE_ST"/>
    <property type="match status" value="1"/>
</dbReference>
<feature type="chain" id="PRO_0000192867" description="Casein kinase I isoform alpha">
    <location>
        <begin position="1"/>
        <end position="341"/>
    </location>
</feature>
<feature type="domain" description="Protein kinase" evidence="1">
    <location>
        <begin position="16"/>
        <end position="284"/>
    </location>
</feature>
<feature type="region of interest" description="Disordered" evidence="3">
    <location>
        <begin position="306"/>
        <end position="341"/>
    </location>
</feature>
<feature type="compositionally biased region" description="Polar residues" evidence="3">
    <location>
        <begin position="306"/>
        <end position="320"/>
    </location>
</feature>
<feature type="compositionally biased region" description="Low complexity" evidence="3">
    <location>
        <begin position="321"/>
        <end position="341"/>
    </location>
</feature>
<feature type="active site" description="Proton acceptor" evidence="1 2">
    <location>
        <position position="135"/>
    </location>
</feature>
<feature type="binding site" evidence="1">
    <location>
        <begin position="22"/>
        <end position="30"/>
    </location>
    <ligand>
        <name>ATP</name>
        <dbReference type="ChEBI" id="CHEBI:30616"/>
    </ligand>
</feature>
<feature type="binding site" evidence="1">
    <location>
        <position position="45"/>
    </location>
    <ligand>
        <name>ATP</name>
        <dbReference type="ChEBI" id="CHEBI:30616"/>
    </ligand>
</feature>
<name>KC1A_CAEEL</name>
<accession>P42168</accession>
<gene>
    <name type="primary">kin-19</name>
    <name type="ORF">C03C10.1</name>
</gene>
<keyword id="KW-0067">ATP-binding</keyword>
<keyword id="KW-0418">Kinase</keyword>
<keyword id="KW-0547">Nucleotide-binding</keyword>
<keyword id="KW-1185">Reference proteome</keyword>
<keyword id="KW-0723">Serine/threonine-protein kinase</keyword>
<keyword id="KW-0808">Transferase</keyword>
<proteinExistence type="inferred from homology"/>
<comment type="catalytic activity">
    <reaction>
        <text>L-seryl-[protein] + ATP = O-phospho-L-seryl-[protein] + ADP + H(+)</text>
        <dbReference type="Rhea" id="RHEA:17989"/>
        <dbReference type="Rhea" id="RHEA-COMP:9863"/>
        <dbReference type="Rhea" id="RHEA-COMP:11604"/>
        <dbReference type="ChEBI" id="CHEBI:15378"/>
        <dbReference type="ChEBI" id="CHEBI:29999"/>
        <dbReference type="ChEBI" id="CHEBI:30616"/>
        <dbReference type="ChEBI" id="CHEBI:83421"/>
        <dbReference type="ChEBI" id="CHEBI:456216"/>
        <dbReference type="EC" id="2.7.11.1"/>
    </reaction>
</comment>
<comment type="catalytic activity">
    <reaction>
        <text>L-threonyl-[protein] + ATP = O-phospho-L-threonyl-[protein] + ADP + H(+)</text>
        <dbReference type="Rhea" id="RHEA:46608"/>
        <dbReference type="Rhea" id="RHEA-COMP:11060"/>
        <dbReference type="Rhea" id="RHEA-COMP:11605"/>
        <dbReference type="ChEBI" id="CHEBI:15378"/>
        <dbReference type="ChEBI" id="CHEBI:30013"/>
        <dbReference type="ChEBI" id="CHEBI:30616"/>
        <dbReference type="ChEBI" id="CHEBI:61977"/>
        <dbReference type="ChEBI" id="CHEBI:456216"/>
        <dbReference type="EC" id="2.7.11.1"/>
    </reaction>
</comment>
<comment type="similarity">
    <text evidence="4">Belongs to the protein kinase superfamily. CK1 Ser/Thr protein kinase family. Casein kinase I subfamily.</text>
</comment>
<evidence type="ECO:0000255" key="1">
    <source>
        <dbReference type="PROSITE-ProRule" id="PRU00159"/>
    </source>
</evidence>
<evidence type="ECO:0000255" key="2">
    <source>
        <dbReference type="PROSITE-ProRule" id="PRU10027"/>
    </source>
</evidence>
<evidence type="ECO:0000256" key="3">
    <source>
        <dbReference type="SAM" id="MobiDB-lite"/>
    </source>
</evidence>
<evidence type="ECO:0000305" key="4"/>
<protein>
    <recommendedName>
        <fullName>Casein kinase I isoform alpha</fullName>
        <shortName>CKI-alpha</shortName>
        <ecNumber>2.7.11.1</ecNumber>
    </recommendedName>
    <alternativeName>
        <fullName>CK1</fullName>
    </alternativeName>
</protein>
<reference key="1">
    <citation type="journal article" date="1998" name="Science">
        <title>Genome sequence of the nematode C. elegans: a platform for investigating biology.</title>
        <authorList>
            <consortium name="The C. elegans sequencing consortium"/>
        </authorList>
    </citation>
    <scope>NUCLEOTIDE SEQUENCE [LARGE SCALE GENOMIC DNA]</scope>
    <source>
        <strain>Bristol N2</strain>
    </source>
</reference>